<accession>Q2FYU5</accession>
<dbReference type="EMBL" id="CP000253">
    <property type="protein sequence ID" value="ABD30427.1"/>
    <property type="molecule type" value="Genomic_DNA"/>
</dbReference>
<dbReference type="RefSeq" id="WP_001085655.1">
    <property type="nucleotide sequence ID" value="NZ_LS483365.1"/>
</dbReference>
<dbReference type="RefSeq" id="YP_499859.1">
    <property type="nucleotide sequence ID" value="NC_007795.1"/>
</dbReference>
<dbReference type="PDB" id="6YEF">
    <property type="method" value="EM"/>
    <property type="resolution" value="3.20 A"/>
    <property type="chains" value="n=1-89"/>
</dbReference>
<dbReference type="PDBsum" id="6YEF"/>
<dbReference type="EMDB" id="EMD-10791"/>
<dbReference type="SMR" id="Q2FYU5"/>
<dbReference type="STRING" id="93061.SAOUHSC_01329"/>
<dbReference type="PaxDb" id="1280-SAXN108_1353"/>
<dbReference type="GeneID" id="3920194"/>
<dbReference type="GeneID" id="98345705"/>
<dbReference type="KEGG" id="sao:SAOUHSC_01329"/>
<dbReference type="PATRIC" id="fig|93061.5.peg.1215"/>
<dbReference type="eggNOG" id="COG0199">
    <property type="taxonomic scope" value="Bacteria"/>
</dbReference>
<dbReference type="HOGENOM" id="CLU_139869_0_0_9"/>
<dbReference type="OrthoDB" id="9810484at2"/>
<dbReference type="PRO" id="PR:Q2FYU5"/>
<dbReference type="Proteomes" id="UP000008816">
    <property type="component" value="Chromosome"/>
</dbReference>
<dbReference type="GO" id="GO:0005737">
    <property type="term" value="C:cytoplasm"/>
    <property type="evidence" value="ECO:0007669"/>
    <property type="project" value="UniProtKB-ARBA"/>
</dbReference>
<dbReference type="GO" id="GO:0015935">
    <property type="term" value="C:small ribosomal subunit"/>
    <property type="evidence" value="ECO:0000318"/>
    <property type="project" value="GO_Central"/>
</dbReference>
<dbReference type="GO" id="GO:0019843">
    <property type="term" value="F:rRNA binding"/>
    <property type="evidence" value="ECO:0007669"/>
    <property type="project" value="UniProtKB-UniRule"/>
</dbReference>
<dbReference type="GO" id="GO:0003735">
    <property type="term" value="F:structural constituent of ribosome"/>
    <property type="evidence" value="ECO:0000318"/>
    <property type="project" value="GO_Central"/>
</dbReference>
<dbReference type="GO" id="GO:0006412">
    <property type="term" value="P:translation"/>
    <property type="evidence" value="ECO:0000318"/>
    <property type="project" value="GO_Central"/>
</dbReference>
<dbReference type="FunFam" id="4.10.830.10:FF:000003">
    <property type="entry name" value="30S ribosomal protein S14"/>
    <property type="match status" value="1"/>
</dbReference>
<dbReference type="Gene3D" id="4.10.830.10">
    <property type="entry name" value="30s Ribosomal Protein S14, Chain N"/>
    <property type="match status" value="1"/>
</dbReference>
<dbReference type="HAMAP" id="MF_00537">
    <property type="entry name" value="Ribosomal_uS14_1"/>
    <property type="match status" value="1"/>
</dbReference>
<dbReference type="InterPro" id="IPR001209">
    <property type="entry name" value="Ribosomal_uS14"/>
</dbReference>
<dbReference type="InterPro" id="IPR023036">
    <property type="entry name" value="Ribosomal_uS14_bac/plastid"/>
</dbReference>
<dbReference type="InterPro" id="IPR018271">
    <property type="entry name" value="Ribosomal_uS14_CS"/>
</dbReference>
<dbReference type="InterPro" id="IPR043140">
    <property type="entry name" value="Ribosomal_uS14_sf"/>
</dbReference>
<dbReference type="NCBIfam" id="NF006477">
    <property type="entry name" value="PRK08881.1"/>
    <property type="match status" value="1"/>
</dbReference>
<dbReference type="PANTHER" id="PTHR19836">
    <property type="entry name" value="30S RIBOSOMAL PROTEIN S14"/>
    <property type="match status" value="1"/>
</dbReference>
<dbReference type="PANTHER" id="PTHR19836:SF19">
    <property type="entry name" value="SMALL RIBOSOMAL SUBUNIT PROTEIN US14M"/>
    <property type="match status" value="1"/>
</dbReference>
<dbReference type="Pfam" id="PF00253">
    <property type="entry name" value="Ribosomal_S14"/>
    <property type="match status" value="1"/>
</dbReference>
<dbReference type="SUPFAM" id="SSF57716">
    <property type="entry name" value="Glucocorticoid receptor-like (DNA-binding domain)"/>
    <property type="match status" value="1"/>
</dbReference>
<dbReference type="PROSITE" id="PS00527">
    <property type="entry name" value="RIBOSOMAL_S14"/>
    <property type="match status" value="1"/>
</dbReference>
<organism>
    <name type="scientific">Staphylococcus aureus (strain NCTC 8325 / PS 47)</name>
    <dbReference type="NCBI Taxonomy" id="93061"/>
    <lineage>
        <taxon>Bacteria</taxon>
        <taxon>Bacillati</taxon>
        <taxon>Bacillota</taxon>
        <taxon>Bacilli</taxon>
        <taxon>Bacillales</taxon>
        <taxon>Staphylococcaceae</taxon>
        <taxon>Staphylococcus</taxon>
    </lineage>
</organism>
<sequence length="89" mass="10540">MAKKSKIAKERKREELVNKYYELRKELKAKGDYEALRKLPRDSSPTRLTRRCKVTGRPRGVLRKFEMSRIAFREHAHKGQIPGVKKSSW</sequence>
<feature type="chain" id="PRO_0000269061" description="Small ribosomal subunit protein uS14A">
    <location>
        <begin position="1"/>
        <end position="89"/>
    </location>
</feature>
<name>RS14_STAA8</name>
<reference key="1">
    <citation type="book" date="2006" name="Gram positive pathogens, 2nd edition">
        <title>The Staphylococcus aureus NCTC 8325 genome.</title>
        <editorList>
            <person name="Fischetti V."/>
            <person name="Novick R."/>
            <person name="Ferretti J."/>
            <person name="Portnoy D."/>
            <person name="Rood J."/>
        </editorList>
        <authorList>
            <person name="Gillaspy A.F."/>
            <person name="Worrell V."/>
            <person name="Orvis J."/>
            <person name="Roe B.A."/>
            <person name="Dyer D.W."/>
            <person name="Iandolo J.J."/>
        </authorList>
    </citation>
    <scope>NUCLEOTIDE SEQUENCE [LARGE SCALE GENOMIC DNA]</scope>
    <source>
        <strain>NCTC 8325 / PS 47</strain>
    </source>
</reference>
<keyword id="KW-0002">3D-structure</keyword>
<keyword id="KW-1185">Reference proteome</keyword>
<keyword id="KW-0687">Ribonucleoprotein</keyword>
<keyword id="KW-0689">Ribosomal protein</keyword>
<keyword id="KW-0694">RNA-binding</keyword>
<keyword id="KW-0699">rRNA-binding</keyword>
<evidence type="ECO:0000255" key="1">
    <source>
        <dbReference type="HAMAP-Rule" id="MF_00537"/>
    </source>
</evidence>
<evidence type="ECO:0000305" key="2"/>
<proteinExistence type="evidence at protein level"/>
<gene>
    <name evidence="1" type="primary">rpsN</name>
    <name type="synonym">rpsN2</name>
    <name type="ordered locus">SAOUHSC_01329</name>
</gene>
<comment type="function">
    <text evidence="1">Binds 16S rRNA, required for the assembly of 30S particles and may also be responsible for determining the conformation of the 16S rRNA at the A site.</text>
</comment>
<comment type="subunit">
    <text evidence="1">Part of the 30S ribosomal subunit. Contacts proteins S3 and S10.</text>
</comment>
<comment type="similarity">
    <text evidence="1">Belongs to the universal ribosomal protein uS14 family.</text>
</comment>
<protein>
    <recommendedName>
        <fullName evidence="1">Small ribosomal subunit protein uS14A</fullName>
    </recommendedName>
    <alternativeName>
        <fullName evidence="2">30S ribosomal protein S14</fullName>
    </alternativeName>
</protein>